<organism>
    <name type="scientific">Escherichia coli (strain K12 / DH10B)</name>
    <dbReference type="NCBI Taxonomy" id="316385"/>
    <lineage>
        <taxon>Bacteria</taxon>
        <taxon>Pseudomonadati</taxon>
        <taxon>Pseudomonadota</taxon>
        <taxon>Gammaproteobacteria</taxon>
        <taxon>Enterobacterales</taxon>
        <taxon>Enterobacteriaceae</taxon>
        <taxon>Escherichia</taxon>
    </lineage>
</organism>
<protein>
    <recommendedName>
        <fullName evidence="1">Hydroxylamine reductase</fullName>
        <ecNumber evidence="1">1.7.99.1</ecNumber>
    </recommendedName>
    <alternativeName>
        <fullName evidence="1">Hybrid-cluster protein</fullName>
        <shortName evidence="1">HCP</shortName>
    </alternativeName>
    <alternativeName>
        <fullName evidence="1">Prismane protein</fullName>
    </alternativeName>
</protein>
<comment type="function">
    <text evidence="1">Catalyzes the reduction of hydroxylamine to form NH(3) and H(2)O.</text>
</comment>
<comment type="catalytic activity">
    <reaction evidence="1">
        <text>A + NH4(+) + H2O = hydroxylamine + AH2 + H(+)</text>
        <dbReference type="Rhea" id="RHEA:22052"/>
        <dbReference type="ChEBI" id="CHEBI:13193"/>
        <dbReference type="ChEBI" id="CHEBI:15377"/>
        <dbReference type="ChEBI" id="CHEBI:15378"/>
        <dbReference type="ChEBI" id="CHEBI:15429"/>
        <dbReference type="ChEBI" id="CHEBI:17499"/>
        <dbReference type="ChEBI" id="CHEBI:28938"/>
        <dbReference type="EC" id="1.7.99.1"/>
    </reaction>
</comment>
<comment type="cofactor">
    <cofactor evidence="1">
        <name>[2Fe-2S] cluster</name>
        <dbReference type="ChEBI" id="CHEBI:190135"/>
    </cofactor>
    <text evidence="1">Binds 1 [2Fe-2S] cluster.</text>
</comment>
<comment type="cofactor">
    <cofactor evidence="1">
        <name>hybrid [4Fe-2O-2S] cluster</name>
        <dbReference type="ChEBI" id="CHEBI:60519"/>
    </cofactor>
    <text evidence="1">Binds 1 hybrid [4Fe-2O-2S] cluster.</text>
</comment>
<comment type="subcellular location">
    <subcellularLocation>
        <location evidence="1">Cytoplasm</location>
    </subcellularLocation>
</comment>
<comment type="similarity">
    <text evidence="1">Belongs to the HCP family.</text>
</comment>
<accession>B1X814</accession>
<feature type="chain" id="PRO_1000092336" description="Hydroxylamine reductase">
    <location>
        <begin position="1"/>
        <end position="550"/>
    </location>
</feature>
<feature type="binding site" evidence="1">
    <location>
        <position position="3"/>
    </location>
    <ligand>
        <name>[2Fe-2S] cluster</name>
        <dbReference type="ChEBI" id="CHEBI:190135"/>
    </ligand>
</feature>
<feature type="binding site" evidence="1">
    <location>
        <position position="6"/>
    </location>
    <ligand>
        <name>[2Fe-2S] cluster</name>
        <dbReference type="ChEBI" id="CHEBI:190135"/>
    </ligand>
</feature>
<feature type="binding site" evidence="1">
    <location>
        <position position="18"/>
    </location>
    <ligand>
        <name>[2Fe-2S] cluster</name>
        <dbReference type="ChEBI" id="CHEBI:190135"/>
    </ligand>
</feature>
<feature type="binding site" evidence="1">
    <location>
        <position position="25"/>
    </location>
    <ligand>
        <name>[2Fe-2S] cluster</name>
        <dbReference type="ChEBI" id="CHEBI:190135"/>
    </ligand>
</feature>
<feature type="binding site" evidence="1">
    <location>
        <position position="249"/>
    </location>
    <ligand>
        <name>hybrid [4Fe-2O-2S] cluster</name>
        <dbReference type="ChEBI" id="CHEBI:60519"/>
    </ligand>
</feature>
<feature type="binding site" evidence="1">
    <location>
        <position position="273"/>
    </location>
    <ligand>
        <name>hybrid [4Fe-2O-2S] cluster</name>
        <dbReference type="ChEBI" id="CHEBI:60519"/>
    </ligand>
</feature>
<feature type="binding site" evidence="1">
    <location>
        <position position="317"/>
    </location>
    <ligand>
        <name>hybrid [4Fe-2O-2S] cluster</name>
        <dbReference type="ChEBI" id="CHEBI:60519"/>
    </ligand>
</feature>
<feature type="binding site" description="via persulfide group" evidence="1">
    <location>
        <position position="405"/>
    </location>
    <ligand>
        <name>hybrid [4Fe-2O-2S] cluster</name>
        <dbReference type="ChEBI" id="CHEBI:60519"/>
    </ligand>
</feature>
<feature type="binding site" evidence="1">
    <location>
        <position position="433"/>
    </location>
    <ligand>
        <name>hybrid [4Fe-2O-2S] cluster</name>
        <dbReference type="ChEBI" id="CHEBI:60519"/>
    </ligand>
</feature>
<feature type="binding site" evidence="1">
    <location>
        <position position="458"/>
    </location>
    <ligand>
        <name>hybrid [4Fe-2O-2S] cluster</name>
        <dbReference type="ChEBI" id="CHEBI:60519"/>
    </ligand>
</feature>
<feature type="binding site" evidence="1">
    <location>
        <position position="492"/>
    </location>
    <ligand>
        <name>hybrid [4Fe-2O-2S] cluster</name>
        <dbReference type="ChEBI" id="CHEBI:60519"/>
    </ligand>
</feature>
<feature type="binding site" evidence="1">
    <location>
        <position position="494"/>
    </location>
    <ligand>
        <name>hybrid [4Fe-2O-2S] cluster</name>
        <dbReference type="ChEBI" id="CHEBI:60519"/>
    </ligand>
</feature>
<feature type="modified residue" description="Cysteine persulfide" evidence="1">
    <location>
        <position position="405"/>
    </location>
</feature>
<proteinExistence type="inferred from homology"/>
<reference key="1">
    <citation type="journal article" date="2008" name="J. Bacteriol.">
        <title>The complete genome sequence of Escherichia coli DH10B: insights into the biology of a laboratory workhorse.</title>
        <authorList>
            <person name="Durfee T."/>
            <person name="Nelson R."/>
            <person name="Baldwin S."/>
            <person name="Plunkett G. III"/>
            <person name="Burland V."/>
            <person name="Mau B."/>
            <person name="Petrosino J.F."/>
            <person name="Qin X."/>
            <person name="Muzny D.M."/>
            <person name="Ayele M."/>
            <person name="Gibbs R.A."/>
            <person name="Csorgo B."/>
            <person name="Posfai G."/>
            <person name="Weinstock G.M."/>
            <person name="Blattner F.R."/>
        </authorList>
    </citation>
    <scope>NUCLEOTIDE SEQUENCE [LARGE SCALE GENOMIC DNA]</scope>
    <source>
        <strain>K12 / DH10B</strain>
    </source>
</reference>
<evidence type="ECO:0000255" key="1">
    <source>
        <dbReference type="HAMAP-Rule" id="MF_00069"/>
    </source>
</evidence>
<dbReference type="EC" id="1.7.99.1" evidence="1"/>
<dbReference type="EMBL" id="CP000948">
    <property type="protein sequence ID" value="ACB02074.1"/>
    <property type="molecule type" value="Genomic_DNA"/>
</dbReference>
<dbReference type="RefSeq" id="WP_000458809.1">
    <property type="nucleotide sequence ID" value="NC_010473.1"/>
</dbReference>
<dbReference type="SMR" id="B1X814"/>
<dbReference type="KEGG" id="ecd:ECDH10B_0943"/>
<dbReference type="HOGENOM" id="CLU_038344_2_0_6"/>
<dbReference type="GO" id="GO:0005737">
    <property type="term" value="C:cytoplasm"/>
    <property type="evidence" value="ECO:0007669"/>
    <property type="project" value="UniProtKB-SubCell"/>
</dbReference>
<dbReference type="GO" id="GO:0051537">
    <property type="term" value="F:2 iron, 2 sulfur cluster binding"/>
    <property type="evidence" value="ECO:0007669"/>
    <property type="project" value="UniProtKB-KW"/>
</dbReference>
<dbReference type="GO" id="GO:0050418">
    <property type="term" value="F:hydroxylamine reductase activity"/>
    <property type="evidence" value="ECO:0007669"/>
    <property type="project" value="UniProtKB-UniRule"/>
</dbReference>
<dbReference type="GO" id="GO:0046872">
    <property type="term" value="F:metal ion binding"/>
    <property type="evidence" value="ECO:0007669"/>
    <property type="project" value="UniProtKB-KW"/>
</dbReference>
<dbReference type="GO" id="GO:0004601">
    <property type="term" value="F:peroxidase activity"/>
    <property type="evidence" value="ECO:0007669"/>
    <property type="project" value="TreeGrafter"/>
</dbReference>
<dbReference type="GO" id="GO:0042542">
    <property type="term" value="P:response to hydrogen peroxide"/>
    <property type="evidence" value="ECO:0007669"/>
    <property type="project" value="TreeGrafter"/>
</dbReference>
<dbReference type="CDD" id="cd01914">
    <property type="entry name" value="HCP"/>
    <property type="match status" value="1"/>
</dbReference>
<dbReference type="FunFam" id="1.20.1270.20:FF:000001">
    <property type="entry name" value="Hydroxylamine reductase"/>
    <property type="match status" value="1"/>
</dbReference>
<dbReference type="FunFam" id="1.20.1270.20:FF:000002">
    <property type="entry name" value="Hydroxylamine reductase"/>
    <property type="match status" value="1"/>
</dbReference>
<dbReference type="FunFam" id="3.40.50.2030:FF:000001">
    <property type="entry name" value="Hydroxylamine reductase"/>
    <property type="match status" value="1"/>
</dbReference>
<dbReference type="FunFam" id="3.40.50.2030:FF:000002">
    <property type="entry name" value="Hydroxylamine reductase"/>
    <property type="match status" value="1"/>
</dbReference>
<dbReference type="Gene3D" id="1.20.1270.20">
    <property type="match status" value="2"/>
</dbReference>
<dbReference type="Gene3D" id="3.40.50.2030">
    <property type="match status" value="2"/>
</dbReference>
<dbReference type="HAMAP" id="MF_00069">
    <property type="entry name" value="Hydroxylam_reduct"/>
    <property type="match status" value="1"/>
</dbReference>
<dbReference type="InterPro" id="IPR004137">
    <property type="entry name" value="HCP/CODH"/>
</dbReference>
<dbReference type="InterPro" id="IPR010048">
    <property type="entry name" value="Hydroxylam_reduct"/>
</dbReference>
<dbReference type="InterPro" id="IPR016099">
    <property type="entry name" value="Prismane-like_a/b-sand"/>
</dbReference>
<dbReference type="InterPro" id="IPR011254">
    <property type="entry name" value="Prismane-like_sf"/>
</dbReference>
<dbReference type="InterPro" id="IPR016100">
    <property type="entry name" value="Prismane_a-bundle"/>
</dbReference>
<dbReference type="NCBIfam" id="TIGR01703">
    <property type="entry name" value="hybrid_clust"/>
    <property type="match status" value="1"/>
</dbReference>
<dbReference type="NCBIfam" id="NF003658">
    <property type="entry name" value="PRK05290.1"/>
    <property type="match status" value="1"/>
</dbReference>
<dbReference type="PANTHER" id="PTHR30109">
    <property type="entry name" value="HYDROXYLAMINE REDUCTASE"/>
    <property type="match status" value="1"/>
</dbReference>
<dbReference type="PANTHER" id="PTHR30109:SF0">
    <property type="entry name" value="HYDROXYLAMINE REDUCTASE"/>
    <property type="match status" value="1"/>
</dbReference>
<dbReference type="Pfam" id="PF03063">
    <property type="entry name" value="Prismane"/>
    <property type="match status" value="1"/>
</dbReference>
<dbReference type="PIRSF" id="PIRSF000076">
    <property type="entry name" value="HCP"/>
    <property type="match status" value="1"/>
</dbReference>
<dbReference type="SUPFAM" id="SSF56821">
    <property type="entry name" value="Prismane protein-like"/>
    <property type="match status" value="1"/>
</dbReference>
<keyword id="KW-0001">2Fe-2S</keyword>
<keyword id="KW-0963">Cytoplasm</keyword>
<keyword id="KW-0408">Iron</keyword>
<keyword id="KW-0411">Iron-sulfur</keyword>
<keyword id="KW-0479">Metal-binding</keyword>
<keyword id="KW-0560">Oxidoreductase</keyword>
<gene>
    <name evidence="1" type="primary">hcp</name>
    <name type="ordered locus">ECDH10B_0943</name>
</gene>
<sequence>MFCVQCEQTIRTPAGNGCSYAQGMCGKTAETSDLQDLLIAALQGLSAWAVKAREYGIINHDVDSFAPRAFFSTLTNVNFDSPRIVGYAREAIALREALKAQCLAVDANARVDNPMADLQLVSDDLGELQRQAAEFTPNKDKAAIGENILGLRLLCLYGLKGAAAYMEHAHVLGQYDNDIYAQYHKIMAWLGTWPADMNALLECSMEIGQMNFKVMSILDAGETGKYGHPTPTQVNVKATAGKCILISGHDLKDLYNLLEQTEGTGVNVYTHGEMLPAHGYPELRKFKHLVGNYGSGWQNQQVEFARFPGPIVMTSNCIIDPTVGAYDDRIWTRSIVGWPGVRHLDGDDFSAVITQAQQMAGFPYSEIPHLITVGFGRQTLLGAADTLIDLVSREKLRHIFLLGGCDGARGERHYFTDFATSVPDDCLILTLACGKYRFNKLEFGDIEGLPRLVDAGQCNDAYSAIILAVTLAEKLGCGVNDLPLSLVLSWFEQKAIVILLTLLSLGVKNIVTGPTAPGFLTPDLLAVLNEKFGLRSITTVEEDMKQLLSA</sequence>
<name>HCP_ECODH</name>